<gene>
    <name evidence="1" type="primary">env</name>
</gene>
<feature type="signal peptide" evidence="1">
    <location>
        <begin position="1"/>
        <end position="28"/>
    </location>
</feature>
<feature type="chain" id="PRO_0000244651" description="Envelope glycoprotein gp160" evidence="1">
    <location>
        <begin position="29"/>
        <end position="845"/>
    </location>
</feature>
<feature type="chain" id="PRO_0000244652" description="Surface protein gp120" evidence="1">
    <location>
        <begin position="29"/>
        <end position="500"/>
    </location>
</feature>
<feature type="chain" id="PRO_0000244653" description="Transmembrane protein gp41" evidence="1">
    <location>
        <begin position="501"/>
        <end position="845"/>
    </location>
</feature>
<feature type="topological domain" description="Extracellular" evidence="1">
    <location>
        <begin position="29"/>
        <end position="673"/>
    </location>
</feature>
<feature type="transmembrane region" description="Helical" evidence="1">
    <location>
        <begin position="674"/>
        <end position="694"/>
    </location>
</feature>
<feature type="topological domain" description="Cytoplasmic" evidence="1">
    <location>
        <begin position="695"/>
        <end position="845"/>
    </location>
</feature>
<feature type="region of interest" description="V1" evidence="1">
    <location>
        <begin position="127"/>
        <end position="149"/>
    </location>
</feature>
<feature type="region of interest" description="V2" evidence="1">
    <location>
        <begin position="150"/>
        <end position="189"/>
    </location>
</feature>
<feature type="region of interest" description="V3" evidence="1">
    <location>
        <begin position="289"/>
        <end position="322"/>
    </location>
</feature>
<feature type="region of interest" description="CD4-binding loop" evidence="1">
    <location>
        <begin position="355"/>
        <end position="365"/>
    </location>
</feature>
<feature type="region of interest" description="V4" evidence="1">
    <location>
        <begin position="376"/>
        <end position="407"/>
    </location>
</feature>
<feature type="region of interest" description="V5">
    <location>
        <begin position="450"/>
        <end position="460"/>
    </location>
</feature>
<feature type="region of interest" description="V5" evidence="1">
    <location>
        <begin position="452"/>
        <end position="460"/>
    </location>
</feature>
<feature type="region of interest" description="Fusion peptide" evidence="1">
    <location>
        <begin position="501"/>
        <end position="521"/>
    </location>
</feature>
<feature type="region of interest" description="Immunosuppression" evidence="1">
    <location>
        <begin position="563"/>
        <end position="581"/>
    </location>
</feature>
<feature type="region of interest" description="MPER; binding to GalCer" evidence="1">
    <location>
        <begin position="651"/>
        <end position="672"/>
    </location>
</feature>
<feature type="region of interest" description="Disordered" evidence="2">
    <location>
        <begin position="708"/>
        <end position="731"/>
    </location>
</feature>
<feature type="coiled-coil region" evidence="1">
    <location>
        <begin position="622"/>
        <end position="656"/>
    </location>
</feature>
<feature type="short sequence motif" description="YXXL motif; contains endocytosis signal" evidence="1">
    <location>
        <begin position="701"/>
        <end position="704"/>
    </location>
</feature>
<feature type="short sequence motif" description="Di-leucine internalization motif" evidence="1">
    <location>
        <begin position="844"/>
        <end position="845"/>
    </location>
</feature>
<feature type="site" description="Cleavage; by host furin" evidence="1">
    <location>
        <begin position="500"/>
        <end position="501"/>
    </location>
</feature>
<feature type="glycosylation site" description="N-linked (GlcNAc...) asparagine; by host" evidence="1">
    <location>
        <position position="84"/>
    </location>
</feature>
<feature type="glycosylation site" description="N-linked (GlcNAc...) asparagine; by host" evidence="1">
    <location>
        <position position="126"/>
    </location>
</feature>
<feature type="glycosylation site" description="N-linked (GlcNAc...) asparagine; by host" evidence="1">
    <location>
        <position position="132"/>
    </location>
</feature>
<feature type="glycosylation site" description="N-linked (GlcNAc...) asparagine; by host" evidence="1">
    <location>
        <position position="133"/>
    </location>
</feature>
<feature type="glycosylation site" description="N-linked (GlcNAc...) asparagine; by host" evidence="1">
    <location>
        <position position="136"/>
    </location>
</feature>
<feature type="glycosylation site" description="N-linked (GlcNAc...) asparagine; by host" evidence="1">
    <location>
        <position position="149"/>
    </location>
</feature>
<feature type="glycosylation site" description="N-linked (GlcNAc...) asparagine; by host" evidence="1">
    <location>
        <position position="153"/>
    </location>
</feature>
<feature type="glycosylation site" description="N-linked (GlcNAc...) asparagine; by host" evidence="1">
    <location>
        <position position="179"/>
    </location>
</feature>
<feature type="glycosylation site" description="N-linked (GlcNAc...) asparagine; by host" evidence="1">
    <location>
        <position position="180"/>
    </location>
</feature>
<feature type="glycosylation site" description="N-linked (GlcNAc...) asparagine; by host" evidence="1">
    <location>
        <position position="190"/>
    </location>
</feature>
<feature type="glycosylation site" description="N-linked (GlcNAc...) asparagine; by host" evidence="1">
    <location>
        <position position="223"/>
    </location>
</feature>
<feature type="glycosylation site" description="N-linked (GlcNAc...) asparagine; by host" evidence="1">
    <location>
        <position position="227"/>
    </location>
</feature>
<feature type="glycosylation site" description="N-linked (GlcNAc...) asparagine; by host" evidence="1">
    <location>
        <position position="234"/>
    </location>
</feature>
<feature type="glycosylation site" description="N-linked (GlcNAc...) asparagine; by host" evidence="1">
    <location>
        <position position="255"/>
    </location>
</feature>
<feature type="glycosylation site" description="N-linked (GlcNAc...) asparagine; by host" evidence="1">
    <location>
        <position position="269"/>
    </location>
</feature>
<feature type="glycosylation site" description="N-linked (GlcNAc...) asparagine; by host" evidence="1">
    <location>
        <position position="286"/>
    </location>
</feature>
<feature type="glycosylation site" description="N-linked (GlcNAc...) asparagine; by host" evidence="1">
    <location>
        <position position="294"/>
    </location>
</feature>
<feature type="glycosylation site" description="N-linked (GlcNAc...) asparagine; by host" evidence="1">
    <location>
        <position position="324"/>
    </location>
</feature>
<feature type="glycosylation site" description="N-linked (GlcNAc...) asparagine; by host" evidence="1">
    <location>
        <position position="331"/>
    </location>
</feature>
<feature type="glycosylation site" description="N-linked (GlcNAc...) asparagine; by host" evidence="1">
    <location>
        <position position="347"/>
    </location>
</feature>
<feature type="glycosylation site" description="N-linked (GlcNAc...) asparagine; by host" evidence="1">
    <location>
        <position position="377"/>
    </location>
</feature>
<feature type="glycosylation site" description="N-linked (GlcNAc...) asparagine; by host" evidence="1">
    <location>
        <position position="383"/>
    </location>
</feature>
<feature type="glycosylation site" description="N-linked (GlcNAc...) asparagine; by host" evidence="1">
    <location>
        <position position="391"/>
    </location>
</feature>
<feature type="glycosylation site" description="N-linked (GlcNAc...) asparagine; by host" evidence="1">
    <location>
        <position position="395"/>
    </location>
</feature>
<feature type="glycosylation site" description="N-linked (GlcNAc...) asparagine; by host" evidence="1">
    <location>
        <position position="402"/>
    </location>
</feature>
<feature type="glycosylation site" description="N-linked (GlcNAc...) asparagine; by host" evidence="1">
    <location>
        <position position="437"/>
    </location>
</feature>
<feature type="glycosylation site" description="N-linked (GlcNAc...) asparagine; by host" evidence="1">
    <location>
        <position position="449"/>
    </location>
</feature>
<feature type="glycosylation site" description="N-linked (GlcNAc...) asparagine; by host" evidence="1">
    <location>
        <position position="454"/>
    </location>
</feature>
<feature type="glycosylation site" description="N-linked (GlcNAc...) asparagine; by host" evidence="1">
    <location>
        <position position="600"/>
    </location>
</feature>
<feature type="glycosylation site" description="N-linked (GlcNAc...) asparagine; by host" evidence="1">
    <location>
        <position position="605"/>
    </location>
</feature>
<feature type="glycosylation site" description="N-linked (GlcNAc...) asparagine; by host" evidence="1">
    <location>
        <position position="614"/>
    </location>
</feature>
<feature type="glycosylation site" description="N-linked (GlcNAc...) asparagine; by host" evidence="1">
    <location>
        <position position="626"/>
    </location>
</feature>
<feature type="disulfide bond" evidence="1">
    <location>
        <begin position="50"/>
        <end position="70"/>
    </location>
</feature>
<feature type="disulfide bond" evidence="1">
    <location>
        <begin position="115"/>
        <end position="198"/>
    </location>
</feature>
<feature type="disulfide bond" evidence="1">
    <location>
        <begin position="122"/>
        <end position="189"/>
    </location>
</feature>
<feature type="disulfide bond" evidence="1">
    <location>
        <begin position="127"/>
        <end position="150"/>
    </location>
</feature>
<feature type="disulfide bond" evidence="1">
    <location>
        <begin position="211"/>
        <end position="240"/>
    </location>
</feature>
<feature type="disulfide bond" evidence="1">
    <location>
        <begin position="221"/>
        <end position="232"/>
    </location>
</feature>
<feature type="disulfide bond" evidence="1">
    <location>
        <begin position="289"/>
        <end position="323"/>
    </location>
</feature>
<feature type="disulfide bond" evidence="1">
    <location>
        <begin position="369"/>
        <end position="434"/>
    </location>
</feature>
<feature type="disulfide bond" evidence="1">
    <location>
        <begin position="376"/>
        <end position="407"/>
    </location>
</feature>
<feature type="disulfide bond" evidence="1">
    <location>
        <begin position="587"/>
        <end position="593"/>
    </location>
</feature>
<organismHost>
    <name type="scientific">Homo sapiens</name>
    <name type="common">Human</name>
    <dbReference type="NCBI Taxonomy" id="9606"/>
</organismHost>
<dbReference type="EMBL" id="AF005496">
    <property type="protein sequence ID" value="AAD03181.1"/>
    <property type="molecule type" value="Genomic_DNA"/>
</dbReference>
<dbReference type="SMR" id="O70902"/>
<dbReference type="GlyCosmos" id="O70902">
    <property type="glycosylation" value="32 sites, No reported glycans"/>
</dbReference>
<dbReference type="ABCD" id="O70902">
    <property type="antibodies" value="1 sequenced antibody"/>
</dbReference>
<dbReference type="Proteomes" id="UP000007685">
    <property type="component" value="Segment"/>
</dbReference>
<dbReference type="GO" id="GO:0044175">
    <property type="term" value="C:host cell endosome membrane"/>
    <property type="evidence" value="ECO:0007669"/>
    <property type="project" value="UniProtKB-SubCell"/>
</dbReference>
<dbReference type="GO" id="GO:0020002">
    <property type="term" value="C:host cell plasma membrane"/>
    <property type="evidence" value="ECO:0007669"/>
    <property type="project" value="UniProtKB-SubCell"/>
</dbReference>
<dbReference type="GO" id="GO:0016020">
    <property type="term" value="C:membrane"/>
    <property type="evidence" value="ECO:0007669"/>
    <property type="project" value="UniProtKB-UniRule"/>
</dbReference>
<dbReference type="GO" id="GO:0019031">
    <property type="term" value="C:viral envelope"/>
    <property type="evidence" value="ECO:0007669"/>
    <property type="project" value="UniProtKB-KW"/>
</dbReference>
<dbReference type="GO" id="GO:0055036">
    <property type="term" value="C:virion membrane"/>
    <property type="evidence" value="ECO:0007669"/>
    <property type="project" value="UniProtKB-SubCell"/>
</dbReference>
<dbReference type="GO" id="GO:0005198">
    <property type="term" value="F:structural molecule activity"/>
    <property type="evidence" value="ECO:0007669"/>
    <property type="project" value="UniProtKB-UniRule"/>
</dbReference>
<dbReference type="GO" id="GO:0075512">
    <property type="term" value="P:clathrin-dependent endocytosis of virus by host cell"/>
    <property type="evidence" value="ECO:0007669"/>
    <property type="project" value="UniProtKB-UniRule"/>
</dbReference>
<dbReference type="GO" id="GO:0039654">
    <property type="term" value="P:fusion of virus membrane with host endosome membrane"/>
    <property type="evidence" value="ECO:0007669"/>
    <property type="project" value="UniProtKB-UniRule"/>
</dbReference>
<dbReference type="GO" id="GO:0019064">
    <property type="term" value="P:fusion of virus membrane with host plasma membrane"/>
    <property type="evidence" value="ECO:0007669"/>
    <property type="project" value="UniProtKB-UniRule"/>
</dbReference>
<dbReference type="GO" id="GO:1903908">
    <property type="term" value="P:positive regulation of plasma membrane raft polarization"/>
    <property type="evidence" value="ECO:0007669"/>
    <property type="project" value="UniProtKB-UniRule"/>
</dbReference>
<dbReference type="GO" id="GO:1903911">
    <property type="term" value="P:positive regulation of receptor clustering"/>
    <property type="evidence" value="ECO:0007669"/>
    <property type="project" value="UniProtKB-UniRule"/>
</dbReference>
<dbReference type="GO" id="GO:0019082">
    <property type="term" value="P:viral protein processing"/>
    <property type="evidence" value="ECO:0007669"/>
    <property type="project" value="UniProtKB-UniRule"/>
</dbReference>
<dbReference type="GO" id="GO:0019062">
    <property type="term" value="P:virion attachment to host cell"/>
    <property type="evidence" value="ECO:0007669"/>
    <property type="project" value="UniProtKB-UniRule"/>
</dbReference>
<dbReference type="CDD" id="cd09909">
    <property type="entry name" value="HIV-1-like_HR1-HR2"/>
    <property type="match status" value="1"/>
</dbReference>
<dbReference type="FunFam" id="1.10.287.210:FF:000001">
    <property type="entry name" value="Envelope glycoprotein gp160"/>
    <property type="match status" value="1"/>
</dbReference>
<dbReference type="FunFam" id="1.20.5.490:FF:000001">
    <property type="entry name" value="Envelope glycoprotein gp160"/>
    <property type="match status" value="1"/>
</dbReference>
<dbReference type="FunFam" id="2.170.40.20:FF:000002">
    <property type="entry name" value="Envelope glycoprotein gp160"/>
    <property type="match status" value="1"/>
</dbReference>
<dbReference type="FunFam" id="2.170.40.20:FF:000003">
    <property type="entry name" value="Envelope glycoprotein gp160"/>
    <property type="match status" value="1"/>
</dbReference>
<dbReference type="Gene3D" id="1.10.287.210">
    <property type="match status" value="1"/>
</dbReference>
<dbReference type="Gene3D" id="2.170.40.20">
    <property type="entry name" value="Human immunodeficiency virus 1, Gp160, envelope glycoprotein"/>
    <property type="match status" value="2"/>
</dbReference>
<dbReference type="Gene3D" id="1.20.5.490">
    <property type="entry name" value="Single helix bin"/>
    <property type="match status" value="1"/>
</dbReference>
<dbReference type="HAMAP" id="MF_04083">
    <property type="entry name" value="HIV_ENV"/>
    <property type="match status" value="1"/>
</dbReference>
<dbReference type="InterPro" id="IPR036377">
    <property type="entry name" value="Gp120_core_sf"/>
</dbReference>
<dbReference type="InterPro" id="IPR037527">
    <property type="entry name" value="Gp160"/>
</dbReference>
<dbReference type="InterPro" id="IPR000328">
    <property type="entry name" value="GP41-like"/>
</dbReference>
<dbReference type="InterPro" id="IPR000777">
    <property type="entry name" value="HIV1_Gp120"/>
</dbReference>
<dbReference type="Pfam" id="PF00516">
    <property type="entry name" value="GP120"/>
    <property type="match status" value="1"/>
</dbReference>
<dbReference type="Pfam" id="PF00517">
    <property type="entry name" value="GP41"/>
    <property type="match status" value="1"/>
</dbReference>
<dbReference type="SUPFAM" id="SSF56502">
    <property type="entry name" value="gp120 core"/>
    <property type="match status" value="2"/>
</dbReference>
<dbReference type="SUPFAM" id="SSF58069">
    <property type="entry name" value="Virus ectodomain"/>
    <property type="match status" value="1"/>
</dbReference>
<reference key="1">
    <citation type="journal article" date="1998" name="J. Virol.">
        <title>A comprehensive panel of near-full-length clones and reference sequences for non-subtype B isolates of human immunodeficiency virus type 1.</title>
        <authorList>
            <person name="Gao F."/>
            <person name="Robertson D.L."/>
            <person name="Carruthers C.D."/>
            <person name="Morrison S.G."/>
            <person name="Jian B."/>
            <person name="Chen Y."/>
            <person name="Barre-Sinoussi F."/>
            <person name="Girard M."/>
            <person name="Srinivasan A."/>
            <person name="Abimiku A.G."/>
            <person name="Shaw G.M."/>
            <person name="Sharp P.M."/>
            <person name="Hahn B.H."/>
        </authorList>
    </citation>
    <scope>NUCLEOTIDE SEQUENCE [GENOMIC DNA]</scope>
</reference>
<reference key="2">
    <citation type="journal article" date="2003" name="APMIS">
        <title>Pathogens target DC-SIGN to influence their fate DC-SIGN functions as a pathogen receptor with broad specificity.</title>
        <authorList>
            <person name="Geijtenbeek T.B."/>
            <person name="van Kooyk Y."/>
        </authorList>
    </citation>
    <scope>REVIEW</scope>
</reference>
<reference key="3">
    <citation type="journal article" date="2003" name="Biochim. Biophys. Acta">
        <title>The HIV Env-mediated fusion reaction.</title>
        <authorList>
            <person name="Gallo S.A."/>
            <person name="Finnegan C.M."/>
            <person name="Viard M."/>
            <person name="Raviv Y."/>
            <person name="Dimitrov A."/>
            <person name="Rawat S.S."/>
            <person name="Puri A."/>
            <person name="Durell S."/>
            <person name="Blumenthal R."/>
        </authorList>
    </citation>
    <scope>REVIEW</scope>
</reference>
<reference key="4">
    <citation type="journal article" date="2005" name="Cell Death Differ.">
        <title>Mechanisms of apoptosis induction by the HIV-1 envelope.</title>
        <authorList>
            <person name="Perfettini J.-L."/>
            <person name="Castedo M."/>
            <person name="Roumier T."/>
            <person name="Andreau K."/>
            <person name="Nardacci R."/>
            <person name="Piacentini M."/>
            <person name="Kroemer G."/>
        </authorList>
    </citation>
    <scope>REVIEW</scope>
</reference>
<reference key="5">
    <citation type="journal article" date="2005" name="AIDS Res. Hum. Retroviruses">
        <title>V3: HIV's switch-hitter.</title>
        <authorList>
            <person name="Hartley O."/>
            <person name="Klasse P.J."/>
            <person name="Sattentau Q.J."/>
            <person name="Moore J.P."/>
        </authorList>
    </citation>
    <scope>REVIEW</scope>
</reference>
<reference key="6">
    <citation type="journal article" date="2005" name="Drugs">
        <title>Emerging drug targets for antiretroviral therapy.</title>
        <authorList>
            <person name="Reeves J.D."/>
            <person name="Piefer A.J."/>
        </authorList>
    </citation>
    <scope>REVIEW</scope>
</reference>
<reference key="7">
    <citation type="journal article" date="2006" name="EMBO J.">
        <title>HIV and the chemokine system: 10 years later.</title>
        <authorList>
            <person name="Lusso P."/>
        </authorList>
    </citation>
    <scope>REVIEW</scope>
</reference>
<comment type="function">
    <molecule>Envelope glycoprotein gp160</molecule>
    <text evidence="1">Oligomerizes in the host endoplasmic reticulum into predominantly trimers. In a second time, gp160 transits in the host Golgi, where glycosylation is completed. The precursor is then proteolytically cleaved in the trans-Golgi and thereby activated by cellular furin or furin-like proteases to produce gp120 and gp41.</text>
</comment>
<comment type="function">
    <molecule>Surface protein gp120</molecule>
    <text evidence="1">Attaches the virus to the host lymphoid cell by binding to the primary receptor CD4. This interaction induces a structural rearrangement creating a high affinity binding site for a chemokine coreceptor like CXCR4 and/or CCR5. Acts as a ligand for CD209/DC-SIGN and CLEC4M/DC-SIGNR, which are respectively found on dendritic cells (DCs), and on endothelial cells of liver sinusoids and lymph node sinuses. These interactions allow capture of viral particles at mucosal surfaces by these cells and subsequent transmission to permissive cells. HIV subverts the migration properties of dendritic cells to gain access to CD4+ T-cells in lymph nodes. Virus transmission to permissive T-cells occurs either in trans (without DCs infection, through viral capture and transmission), or in cis (following DCs productive infection, through the usual CD4-gp120 interaction), thereby inducing a robust infection. In trans infection, bound virions remain infectious over days and it is proposed that they are not degraded, but protected in non-lysosomal acidic organelles within the DCs close to the cell membrane thus contributing to the viral infectious potential during DCs' migration from the periphery to the lymphoid tissues. On arrival at lymphoid tissues, intact virions recycle back to DCs' cell surface allowing virus transmission to CD4+ T-cells.</text>
</comment>
<comment type="function">
    <molecule>Transmembrane protein gp41</molecule>
    <text evidence="1">Acts as a class I viral fusion protein. Under the current model, the protein has at least 3 conformational states: pre-fusion native state, pre-hairpin intermediate state, and post-fusion hairpin state. During fusion of viral and target intracellular membranes, the coiled coil regions (heptad repeats) assume a trimer-of-hairpins structure, positioning the fusion peptide in close proximity to the C-terminal region of the ectodomain. The formation of this structure appears to drive apposition and subsequent fusion of viral and target cell membranes. Complete fusion occurs in host cell endosomes and is dynamin-dependent, however some lipid transfer might occur at the plasma membrane. The virus undergoes clathrin-dependent internalization long before endosomal fusion, thus minimizing the surface exposure of conserved viral epitopes during fusion and reducing the efficacy of inhibitors targeting these epitopes. Membranes fusion leads to delivery of the nucleocapsid into the cytoplasm.</text>
</comment>
<comment type="subunit">
    <molecule>Surface protein gp120</molecule>
    <text evidence="1">The mature envelope protein (Env) consists of a homotrimer of non-covalently associated gp120-gp41 heterodimers. The resulting complex protrudes from the virus surface as a spike. There seems to be as few as 10 spikes on the average virion. Interacts with host CD4, CCR5 and CXCR4. Gp120 also interacts with the C-type lectins CD209/DC-SIGN and CLEC4M/DC-SIGNR (collectively referred to as DC-SIGN(R)). Gp120 and gp41 interact with GalCer. Gp120 interacts with host ITGA4/ITGB7 complex; on CD4+ T-cells, this interaction results in rapid activation of integrin ITGAL/LFA-1, which facilitates efficient cell-to-cell spreading of HIV-1. Gp120 interacts with cell-associated heparan sulfate; this interaction increases virus infectivity on permissive cells and may be involved in infection of CD4- cells.</text>
</comment>
<comment type="subunit">
    <molecule>Transmembrane protein gp41</molecule>
    <text evidence="1">The mature envelope protein (Env) consists of a homotrimer of non-covalently associated gp120-gp41 heterodimers. The resulting complex protrudes from the virus surface as a spike. There seems to be as few as 10 spikes on the average virion.</text>
</comment>
<comment type="subcellular location">
    <molecule>Surface protein gp120</molecule>
    <subcellularLocation>
        <location evidence="1">Virion membrane</location>
        <topology evidence="1">Peripheral membrane protein</topology>
    </subcellularLocation>
    <subcellularLocation>
        <location evidence="1">Host cell membrane</location>
        <topology evidence="1">Peripheral membrane protein</topology>
    </subcellularLocation>
    <subcellularLocation>
        <location evidence="1">Host endosome membrane</location>
        <topology evidence="1">Single-pass type I membrane protein</topology>
    </subcellularLocation>
    <text evidence="1">The surface protein is not anchored to the viral envelope, but associates with the extravirion surface through its binding to TM. It is probably concentrated at the site of budding and incorporated into the virions possibly by contacts between the cytoplasmic tail of Env and the N-terminus of Gag.</text>
</comment>
<comment type="subcellular location">
    <molecule>Transmembrane protein gp41</molecule>
    <subcellularLocation>
        <location evidence="1">Virion membrane</location>
        <topology evidence="1">Single-pass type I membrane protein</topology>
    </subcellularLocation>
    <subcellularLocation>
        <location evidence="1">Host cell membrane</location>
        <topology evidence="1">Single-pass type I membrane protein</topology>
    </subcellularLocation>
    <subcellularLocation>
        <location evidence="1">Host endosome membrane</location>
        <topology evidence="1">Single-pass type I membrane protein</topology>
    </subcellularLocation>
    <text evidence="1">It is probably concentrated at the site of budding and incorporated into the virions possibly by contacts between the cytoplasmic tail of Env and the N-terminus of Gag.</text>
</comment>
<comment type="domain">
    <text evidence="1">Some of the most genetically diverse regions of the viral genome are present in Env. They are called variable regions 1 through 5 (V1 through V5). Coreceptor usage of gp120 is determined mainly by the primary structure of the third variable region (V3) in the outer domain of gp120. The sequence of V3 determines which coreceptor, CCR5 and/or CXCR4 (corresponding to R5/macrophage, X4/T cell and R5X4/T cell and macrophage tropism), is used to trigger the fusion potential of the Env complex, and hence which cells the virus can infect. Binding to CCR5 involves a region adjacent in addition to V3.</text>
</comment>
<comment type="domain">
    <text evidence="1">The membrane proximal external region (MPER) present in gp41 is a tryptophan-rich region recognized by the antibodies 2F5, Z13, and 4E10. MPER seems to play a role in fusion.</text>
</comment>
<comment type="domain">
    <text evidence="1">The 17 amino acids long immunosuppressive region is present in many retroviral envelope proteins. Synthetic peptides derived from this relatively conserved sequence inhibit immune function in vitro and in vivo.</text>
</comment>
<comment type="domain">
    <text evidence="1">The YXXL motif is involved in determining the exact site of viral release at the surface of infected mononuclear cells and promotes endocytosis. YXXL and di-leucine endocytosis motifs interact directly or indirectly with the clathrin adapter complexes, opperate independently, and their activities are not additive.</text>
</comment>
<comment type="domain">
    <text evidence="1">The CD4-binding region is targeted by the antibody b12.</text>
</comment>
<comment type="PTM">
    <text evidence="1">Highly glycosylated by host. The high number of glycan on the protein is reffered to as 'glycan shield' because it contributes to hide protein sequence from adaptive immune system.</text>
</comment>
<comment type="PTM">
    <text evidence="1">Palmitoylation of the transmembrane protein and of Env polyprotein (prior to its proteolytic cleavage) is essential for their association with host cell membrane lipid rafts. Palmitoylation is therefore required for envelope trafficking to classical lipid rafts, but not for viral replication.</text>
</comment>
<comment type="PTM">
    <text evidence="1">Specific enzymatic cleavages in vivo yield mature proteins. Envelope glycoproteins are synthesized as an inactive precursor that is heavily N-glycosylated and processed likely by host cell furin in the Golgi to yield the mature SU and TM proteins. The cleavage site between SU and TM requires the minimal sequence [KR]-X-[KR]-R. About 2 of the 9 disulfide bonds of gp41 are reduced by P4HB/PDI, following binding to CD4 receptor.</text>
</comment>
<comment type="miscellaneous">
    <text evidence="1">Inhibitors targeting HIV-1 viral envelope proteins are used as antiretroviral drugs. Attachment of virions to the cell surface via non-specific interactions and CD4 binding can be blocked by inhibitors that include cyanovirin-N, cyclotriazadisulfonamide analogs, PRO 2000, TNX 355 and PRO 542. In addition, BMS 806 can block CD4-induced conformational changes. Env interactions with the coreceptor molecules can be targeted by CCR5 antagonists including SCH-D, maraviroc (UK 427857) and aplaviroc (GW 873140), and the CXCR4 antagonist AMD 070. Fusion of viral and cellular membranes can be inhibited by peptides such as enfuvirtide and tifuvirtide (T 1249). Resistance to inhibitors associated with mutations in Env are observed. Most of the time, single mutations confer only a modest reduction in drug susceptibility. Combination of several mutations is usually required to develop a high-level drug resistance.</text>
</comment>
<comment type="miscellaneous">
    <text evidence="1">HIV-1 lineages are divided in three main groups, M (for Major), O (for Outlier), and N (for New, or Non-M, Non-O). The vast majority of strains found worldwide belong to the group M. Group O seems to be endemic to and largely confined to Cameroon and neighboring countries in West Central Africa, where these viruses represent a small minority of HIV-1 strains. The group N is represented by a limited number of isolates from Cameroonian persons. The group M is further subdivided in 9 clades or subtypes (A to D, F to H, J and K).</text>
</comment>
<comment type="similarity">
    <text evidence="1">Belongs to the HIV-1 env protein family.</text>
</comment>
<comment type="online information" name="hivdb">
    <link uri="https://hivdb.stanford.edu"/>
    <text>HIV drug resistance database</text>
</comment>
<comment type="online information" name="HIV drug resistance mutations">
    <link uri="https://www.iasusa.org/hiv-drug-resistance/hiv-drug-resistance-mutations/"/>
</comment>
<protein>
    <recommendedName>
        <fullName evidence="1">Envelope glycoprotein gp160</fullName>
    </recommendedName>
    <alternativeName>
        <fullName evidence="1">Env polyprotein</fullName>
    </alternativeName>
    <component>
        <recommendedName>
            <fullName evidence="1">Surface protein gp120</fullName>
            <shortName evidence="1">SU</shortName>
        </recommendedName>
        <alternativeName>
            <fullName evidence="1">Glycoprotein 120</fullName>
            <shortName evidence="1">gp120</shortName>
        </alternativeName>
    </component>
    <component>
        <recommendedName>
            <fullName evidence="1">Transmembrane protein gp41</fullName>
            <shortName evidence="1">TM</shortName>
        </recommendedName>
        <alternativeName>
            <fullName evidence="1">Glycoprotein 41</fullName>
            <shortName evidence="1">gp41</shortName>
        </alternativeName>
    </component>
</protein>
<sequence>METQRNYPSLWRWGTLILGMLLICSAAQNLWVTVYYGVPVWKEAKTTLFCASDAKAYETEKHNVWATHACVPTDPNPQEMVMENVTESFNMWENNMVEQMHTDIISLWDQSLKPCVKLTPLCVTLNCTNVRNNTSNSTSSMEAGGELTNCSFNVTTVLRDKQQKVHALFYRLDVVPIDNNSTQYRLINCNTSVITQACPKVSFEPIPIHYCAPAGFAILKCNNKTFNGTGLCTNVSTVQCTHGIRPVVSTQLLLNGSLAEEQIIIRTKNISDNTKNIIVQLKTPVNITCTRPNNNTRTSIHLGPGRAFYATGDIIGDIRQAHCNISRTDWNKTLHQVVTQLGIHLNNRTISFKPNSGGDMEVRTHSFNCRGEFFYCNTSGLFNSSWEMHTNYTSNDTKGNENITLPCRIKQIVNMWQRVGRAMYAPPIQGNIMCVSNITGLILTIDEGNASAENYTFRPGGGDMRDNWRSELYKYKVVKIEPLGIAPTKTRRRVVEREKRAVGMGASFLGFLGAAGSTMGAASITLTVQARQLLSGIVQQQSNLLRAIQARQHMLQLTVWGIKQLQARVLAVERYLRDQQLLGIWGCSGKLICTTNVPWNSSWSNKSQSEIWDNMTWMEWDKQISNYTEEIYRLLEVSQTQQEKNEQDLLALDKWASLWTWFDISHWLWYIKIFIMIVGGLIGLRIIFAVLSIVNRVRQGYSPLSFQTLVPNPRGPDRPEGTEEGGGEQDRDRSVRLVNGFLPVVWDDLRSLSLFSYRLLRDLLLIVVRTVELLGRRGREALKYLWNLLQYWGQELKNSAIDLLNTTAIAVAEGTDGIIVIVQRAWRAILHIPRRIRQGFERSLL</sequence>
<accession>O70902</accession>
<evidence type="ECO:0000255" key="1">
    <source>
        <dbReference type="HAMAP-Rule" id="MF_04083"/>
    </source>
</evidence>
<evidence type="ECO:0000256" key="2">
    <source>
        <dbReference type="SAM" id="MobiDB-lite"/>
    </source>
</evidence>
<keyword id="KW-0014">AIDS</keyword>
<keyword id="KW-0053">Apoptosis</keyword>
<keyword id="KW-1165">Clathrin-mediated endocytosis of virus by host</keyword>
<keyword id="KW-0165">Cleavage on pair of basic residues</keyword>
<keyword id="KW-0175">Coiled coil</keyword>
<keyword id="KW-1015">Disulfide bond</keyword>
<keyword id="KW-1170">Fusion of virus membrane with host endosomal membrane</keyword>
<keyword id="KW-1168">Fusion of virus membrane with host membrane</keyword>
<keyword id="KW-0325">Glycoprotein</keyword>
<keyword id="KW-1032">Host cell membrane</keyword>
<keyword id="KW-1039">Host endosome</keyword>
<keyword id="KW-1043">Host membrane</keyword>
<keyword id="KW-0945">Host-virus interaction</keyword>
<keyword id="KW-0449">Lipoprotein</keyword>
<keyword id="KW-0472">Membrane</keyword>
<keyword id="KW-0564">Palmitate</keyword>
<keyword id="KW-1185">Reference proteome</keyword>
<keyword id="KW-0732">Signal</keyword>
<keyword id="KW-0812">Transmembrane</keyword>
<keyword id="KW-1133">Transmembrane helix</keyword>
<keyword id="KW-1161">Viral attachment to host cell</keyword>
<keyword id="KW-0261">Viral envelope protein</keyword>
<keyword id="KW-0899">Viral immunoevasion</keyword>
<keyword id="KW-1162">Viral penetration into host cytoplasm</keyword>
<keyword id="KW-0946">Virion</keyword>
<keyword id="KW-1164">Virus endocytosis by host</keyword>
<keyword id="KW-1160">Virus entry into host cell</keyword>
<organism>
    <name type="scientific">Human immunodeficiency virus type 1 group M subtype H (isolate 90CF056)</name>
    <name type="common">HIV-1</name>
    <dbReference type="NCBI Taxonomy" id="388826"/>
    <lineage>
        <taxon>Viruses</taxon>
        <taxon>Riboviria</taxon>
        <taxon>Pararnavirae</taxon>
        <taxon>Artverviricota</taxon>
        <taxon>Revtraviricetes</taxon>
        <taxon>Ortervirales</taxon>
        <taxon>Retroviridae</taxon>
        <taxon>Orthoretrovirinae</taxon>
        <taxon>Lentivirus</taxon>
        <taxon>Human immunodeficiency virus type 1</taxon>
    </lineage>
</organism>
<proteinExistence type="inferred from homology"/>
<name>ENV_HV190</name>